<name>NMD4_CANAL</name>
<organism>
    <name type="scientific">Candida albicans (strain SC5314 / ATCC MYA-2876)</name>
    <name type="common">Yeast</name>
    <dbReference type="NCBI Taxonomy" id="237561"/>
    <lineage>
        <taxon>Eukaryota</taxon>
        <taxon>Fungi</taxon>
        <taxon>Dikarya</taxon>
        <taxon>Ascomycota</taxon>
        <taxon>Saccharomycotina</taxon>
        <taxon>Pichiomycetes</taxon>
        <taxon>Debaryomycetaceae</taxon>
        <taxon>Candida/Lodderomyces clade</taxon>
        <taxon>Candida</taxon>
    </lineage>
</organism>
<comment type="function">
    <text evidence="1">Involved in nonsense-mediated decay of mRNAs containing premature stop codons.</text>
</comment>
<comment type="subcellular location">
    <subcellularLocation>
        <location evidence="1">Cytoplasm</location>
    </subcellularLocation>
</comment>
<proteinExistence type="inferred from homology"/>
<accession>Q5AM50</accession>
<accession>A0A1D8PGI4</accession>
<accession>Q5ALQ0</accession>
<keyword id="KW-0963">Cytoplasm</keyword>
<keyword id="KW-0866">Nonsense-mediated mRNA decay</keyword>
<keyword id="KW-1185">Reference proteome</keyword>
<dbReference type="EMBL" id="CP017624">
    <property type="protein sequence ID" value="AOW27249.1"/>
    <property type="molecule type" value="Genomic_DNA"/>
</dbReference>
<dbReference type="RefSeq" id="XP_722569.1">
    <property type="nucleotide sequence ID" value="XM_717476.2"/>
</dbReference>
<dbReference type="SMR" id="Q5AM50"/>
<dbReference type="FunCoup" id="Q5AM50">
    <property type="interactions" value="40"/>
</dbReference>
<dbReference type="STRING" id="237561.Q5AM50"/>
<dbReference type="EnsemblFungi" id="C2_02090W_A-T">
    <property type="protein sequence ID" value="C2_02090W_A-T-p1"/>
    <property type="gene ID" value="C2_02090W_A"/>
</dbReference>
<dbReference type="GeneID" id="3635854"/>
<dbReference type="KEGG" id="cal:CAALFM_C202090WA"/>
<dbReference type="CGD" id="CAL0000184115">
    <property type="gene designation" value="orf19.9101"/>
</dbReference>
<dbReference type="VEuPathDB" id="FungiDB:C2_02090W_A"/>
<dbReference type="eggNOG" id="ENOG502S5VM">
    <property type="taxonomic scope" value="Eukaryota"/>
</dbReference>
<dbReference type="HOGENOM" id="CLU_049919_0_0_1"/>
<dbReference type="InParanoid" id="Q5AM50"/>
<dbReference type="OrthoDB" id="5361617at2759"/>
<dbReference type="PRO" id="PR:Q5AM50"/>
<dbReference type="Proteomes" id="UP000000559">
    <property type="component" value="Chromosome 2"/>
</dbReference>
<dbReference type="GO" id="GO:0005737">
    <property type="term" value="C:cytoplasm"/>
    <property type="evidence" value="ECO:0007669"/>
    <property type="project" value="UniProtKB-SubCell"/>
</dbReference>
<dbReference type="GO" id="GO:0000184">
    <property type="term" value="P:nuclear-transcribed mRNA catabolic process, nonsense-mediated decay"/>
    <property type="evidence" value="ECO:0007669"/>
    <property type="project" value="UniProtKB-KW"/>
</dbReference>
<dbReference type="Gene3D" id="3.40.50.1010">
    <property type="entry name" value="5'-nuclease"/>
    <property type="match status" value="1"/>
</dbReference>
<gene>
    <name type="primary">NMD4</name>
    <name type="ordered locus">CAALFM_C202090WA</name>
    <name type="ORF">CaO19.1525</name>
    <name type="ORF">CaO19.9101</name>
</gene>
<feature type="chain" id="PRO_0000096875" description="Nonsense-mediated decay protein 4">
    <location>
        <begin position="1"/>
        <end position="398"/>
    </location>
</feature>
<feature type="region of interest" description="Disordered" evidence="2">
    <location>
        <begin position="327"/>
        <end position="355"/>
    </location>
</feature>
<feature type="compositionally biased region" description="Basic residues" evidence="2">
    <location>
        <begin position="335"/>
        <end position="350"/>
    </location>
</feature>
<protein>
    <recommendedName>
        <fullName>Nonsense-mediated decay protein 4</fullName>
    </recommendedName>
</protein>
<reference key="1">
    <citation type="journal article" date="2004" name="Proc. Natl. Acad. Sci. U.S.A.">
        <title>The diploid genome sequence of Candida albicans.</title>
        <authorList>
            <person name="Jones T."/>
            <person name="Federspiel N.A."/>
            <person name="Chibana H."/>
            <person name="Dungan J."/>
            <person name="Kalman S."/>
            <person name="Magee B.B."/>
            <person name="Newport G."/>
            <person name="Thorstenson Y.R."/>
            <person name="Agabian N."/>
            <person name="Magee P.T."/>
            <person name="Davis R.W."/>
            <person name="Scherer S."/>
        </authorList>
    </citation>
    <scope>NUCLEOTIDE SEQUENCE [LARGE SCALE GENOMIC DNA]</scope>
    <source>
        <strain>SC5314 / ATCC MYA-2876</strain>
    </source>
</reference>
<reference key="2">
    <citation type="journal article" date="2007" name="Genome Biol.">
        <title>Assembly of the Candida albicans genome into sixteen supercontigs aligned on the eight chromosomes.</title>
        <authorList>
            <person name="van het Hoog M."/>
            <person name="Rast T.J."/>
            <person name="Martchenko M."/>
            <person name="Grindle S."/>
            <person name="Dignard D."/>
            <person name="Hogues H."/>
            <person name="Cuomo C."/>
            <person name="Berriman M."/>
            <person name="Scherer S."/>
            <person name="Magee B.B."/>
            <person name="Whiteway M."/>
            <person name="Chibana H."/>
            <person name="Nantel A."/>
            <person name="Magee P.T."/>
        </authorList>
    </citation>
    <scope>GENOME REANNOTATION</scope>
    <source>
        <strain>SC5314 / ATCC MYA-2876</strain>
    </source>
</reference>
<reference key="3">
    <citation type="journal article" date="2013" name="Genome Biol.">
        <title>Assembly of a phased diploid Candida albicans genome facilitates allele-specific measurements and provides a simple model for repeat and indel structure.</title>
        <authorList>
            <person name="Muzzey D."/>
            <person name="Schwartz K."/>
            <person name="Weissman J.S."/>
            <person name="Sherlock G."/>
        </authorList>
    </citation>
    <scope>NUCLEOTIDE SEQUENCE [LARGE SCALE GENOMIC DNA]</scope>
    <scope>GENOME REANNOTATION</scope>
    <source>
        <strain>SC5314 / ATCC MYA-2876</strain>
    </source>
</reference>
<sequence>MSLELSSNESEDNFRDELVDISGQVSKKPINIDSRQVRLILDHTAFVRGIGNIKRWFNEEYINSNTTRSNEIINLNIYIPTYTLHEFDFVKKGTSISATNAREAIRFIDNYLENEVEMNSDKIQYNLILESPQDNVPSWNKCNHYKVHSPKIKEFPNYKTKFDSSLIGQTPNVNEDSEFNENFDNALTFNQRNKLNDIQYENSASYQNAIANSDNLAEMPVRLRYLIRSCIYKRFIETKKPKIKNEIEDWKLVTEDPITKIWAKSYGIDCLNVNEAELLIFQNYDVNSFRLYNPYANDGDDFDPSTNILQNTIDTTLYSYSSVQDEPVTSNYRGKNNRGRNNRGRRGNKRRERERWPLSTDAVVSEERNESGTGFIKKEKFGAINYAPRGQGELWRPG</sequence>
<evidence type="ECO:0000250" key="1"/>
<evidence type="ECO:0000256" key="2">
    <source>
        <dbReference type="SAM" id="MobiDB-lite"/>
    </source>
</evidence>